<dbReference type="EMBL" id="X68307">
    <property type="protein sequence ID" value="CAA48381.1"/>
    <property type="molecule type" value="Genomic_DNA"/>
</dbReference>
<dbReference type="EMBL" id="L16226">
    <property type="protein sequence ID" value="AAA25190.1"/>
    <property type="molecule type" value="Genomic_DNA"/>
</dbReference>
<dbReference type="EMBL" id="M65089">
    <property type="protein sequence ID" value="AAA73039.1"/>
    <property type="molecule type" value="Genomic_DNA"/>
</dbReference>
<dbReference type="EMBL" id="J04057">
    <property type="protein sequence ID" value="AAA88607.1"/>
    <property type="molecule type" value="Genomic_DNA"/>
</dbReference>
<dbReference type="EMBL" id="D10768">
    <property type="protein sequence ID" value="BAA01599.1"/>
    <property type="molecule type" value="Genomic_DNA"/>
</dbReference>
<dbReference type="PIR" id="S36735">
    <property type="entry name" value="C31915"/>
</dbReference>
<dbReference type="PDB" id="4WD9">
    <property type="method" value="X-ray"/>
    <property type="resolution" value="2.90 A"/>
    <property type="chains" value="A/B=1-993"/>
</dbReference>
<dbReference type="PDB" id="6M7Y">
    <property type="method" value="X-ray"/>
    <property type="resolution" value="2.79 A"/>
    <property type="chains" value="A/B=2-993"/>
</dbReference>
<dbReference type="PDBsum" id="4WD9"/>
<dbReference type="PDBsum" id="6M7Y"/>
<dbReference type="SMR" id="P20103"/>
<dbReference type="DIP" id="DIP-61450N"/>
<dbReference type="BioCyc" id="MetaCyc:MONOMER-21971"/>
<dbReference type="EvolutionaryTrace" id="P20103"/>
<dbReference type="GO" id="GO:0005886">
    <property type="term" value="C:plasma membrane"/>
    <property type="evidence" value="ECO:0007669"/>
    <property type="project" value="UniProtKB-SubCell"/>
</dbReference>
<dbReference type="InterPro" id="IPR006827">
    <property type="entry name" value="Lant_deHydtase_N"/>
</dbReference>
<dbReference type="InterPro" id="IPR023809">
    <property type="entry name" value="Thiopep_bacteriocin_synth_dom"/>
</dbReference>
<dbReference type="NCBIfam" id="TIGR03891">
    <property type="entry name" value="thiopep_ocin"/>
    <property type="match status" value="1"/>
</dbReference>
<dbReference type="Pfam" id="PF14028">
    <property type="entry name" value="Lant_dehydr_C"/>
    <property type="match status" value="1"/>
</dbReference>
<dbReference type="Pfam" id="PF04738">
    <property type="entry name" value="Lant_dehydr_N"/>
    <property type="match status" value="1"/>
</dbReference>
<keyword id="KW-0002">3D-structure</keyword>
<keyword id="KW-1003">Cell membrane</keyword>
<keyword id="KW-0472">Membrane</keyword>
<keyword id="KW-0812">Transmembrane</keyword>
<keyword id="KW-1133">Transmembrane helix</keyword>
<keyword id="KW-0813">Transport</keyword>
<protein>
    <recommendedName>
        <fullName>Nisin biosynthesis protein NisB</fullName>
    </recommendedName>
</protein>
<reference key="1">
    <citation type="journal article" date="1992" name="Appl. Environ. Microbiol.">
        <title>Biosynthesis of the lantibiotic nisin: genomic organization and membrane localization of the NisB protein.</title>
        <authorList>
            <person name="Engelke G."/>
            <person name="Gutowski-Eckel Z."/>
            <person name="Hammelmann M."/>
            <person name="Entian K.-D."/>
        </authorList>
    </citation>
    <scope>NUCLEOTIDE SEQUENCE [GENOMIC DNA]</scope>
    <source>
        <strain>6F3</strain>
    </source>
</reference>
<reference key="2">
    <citation type="journal article" date="1993" name="Eur. J. Biochem.">
        <title>Characterization of the nisin gene cluster nisABTCIPR of Lactococcus lactis. Requirement of expression of the nisA and nisI genes for development of immunity.</title>
        <authorList>
            <person name="Kuipers O.P."/>
            <person name="Beerthuyzen M.M."/>
            <person name="Siezen R.J."/>
            <person name="de Vos W.M."/>
        </authorList>
    </citation>
    <scope>NUCLEOTIDE SEQUENCE [GENOMIC DNA]</scope>
    <source>
        <strain>NIZO R5</strain>
    </source>
</reference>
<reference key="3">
    <citation type="journal article" date="1991" name="Appl. Environ. Microbiol.">
        <title>Characterization of the nisin gene as part of a polycistronic operon in the chromosome of Lactococcus lactis ATCC 11454.</title>
        <authorList>
            <person name="Steen M.T."/>
            <person name="Chung Y.J."/>
            <person name="Hansen J.N."/>
        </authorList>
    </citation>
    <scope>NUCLEOTIDE SEQUENCE [GENOMIC DNA] OF 1-852</scope>
    <source>
        <strain>ATCC 11454 / DSM 20729 / LMG 7930 / NCDO 496 / NCIMB 8586 / Berridge X 13</strain>
    </source>
</reference>
<reference key="4">
    <citation type="journal article" date="1988" name="J. Biol. Chem.">
        <title>Structure, expression, and evolution of a gene encoding the precursor of nisin, a small protein antibiotic.</title>
        <authorList>
            <person name="Buchman G.W."/>
            <person name="Banerjee S."/>
            <person name="Hansen J.N."/>
        </authorList>
    </citation>
    <scope>NUCLEOTIDE SEQUENCE [GENOMIC DNA] OF 1-63</scope>
    <source>
        <strain>ATCC 11454 / DSM 20729 / LMG 7930 / NCDO 496 / NCIMB 8586 / Berridge X 13</strain>
    </source>
</reference>
<reference key="5">
    <citation type="journal article" date="1992" name="J. Gen. Appl. Microbiol.">
        <title>Genetic evidence that Lactococcus lactis JCM7638 produces a mutated form of nisin.</title>
        <authorList>
            <person name="Araya T."/>
            <person name="Ishibashi N."/>
            <person name="Shimamura S."/>
        </authorList>
    </citation>
    <scope>NUCLEOTIDE SEQUENCE [GENOMIC DNA] OF 1-7</scope>
    <source>
        <strain>CIP 103449 / JCM 7638</strain>
    </source>
</reference>
<evidence type="ECO:0000255" key="1"/>
<evidence type="ECO:0000305" key="2"/>
<evidence type="ECO:0007829" key="3">
    <source>
        <dbReference type="PDB" id="4WD9"/>
    </source>
</evidence>
<evidence type="ECO:0007829" key="4">
    <source>
        <dbReference type="PDB" id="6M7Y"/>
    </source>
</evidence>
<proteinExistence type="evidence at protein level"/>
<organism>
    <name type="scientific">Lactococcus lactis subsp. lactis</name>
    <name type="common">Streptococcus lactis</name>
    <dbReference type="NCBI Taxonomy" id="1360"/>
    <lineage>
        <taxon>Bacteria</taxon>
        <taxon>Bacillati</taxon>
        <taxon>Bacillota</taxon>
        <taxon>Bacilli</taxon>
        <taxon>Lactobacillales</taxon>
        <taxon>Streptococcaceae</taxon>
        <taxon>Lactococcus</taxon>
    </lineage>
</organism>
<name>NISB_LACLL</name>
<accession>P20103</accession>
<gene>
    <name type="primary">nisB</name>
</gene>
<comment type="function">
    <text>Involved in the post-translational modification of the lantibiotic nisin.</text>
</comment>
<comment type="subcellular location">
    <subcellularLocation>
        <location>Cell membrane</location>
        <topology>Single-pass membrane protein</topology>
        <orientation>Cytoplasmic side</orientation>
    </subcellularLocation>
    <text>Possibly associated with, and anchored to, the cytoplasmic side of the membrane.</text>
</comment>
<comment type="similarity">
    <text evidence="2">To B.subtilis SpaB and S.epidermidis EpiB.</text>
</comment>
<feature type="chain" id="PRO_0000096863" description="Nisin biosynthesis protein NisB">
    <location>
        <begin position="1"/>
        <end position="993"/>
    </location>
</feature>
<feature type="transmembrane region" description="Helical" evidence="1">
    <location>
        <begin position="838"/>
        <end position="851"/>
    </location>
</feature>
<feature type="sequence conflict" description="In Ref. 2 and 3." evidence="2" ref="2 3">
    <original>C</original>
    <variation>S</variation>
    <location>
        <position position="19"/>
    </location>
</feature>
<feature type="sequence conflict" description="In Ref. 2 and 3." evidence="2" ref="2 3">
    <original>K</original>
    <variation>E</variation>
    <location>
        <position position="656"/>
    </location>
</feature>
<feature type="sequence conflict" description="In Ref. 3." evidence="2" ref="3">
    <original>CADSKIIPNLLT</original>
    <variation>VPILKLFQICLH</variation>
    <location>
        <begin position="841"/>
        <end position="852"/>
    </location>
</feature>
<feature type="sequence conflict" description="In Ref. 2; AAA25190." evidence="2" ref="2">
    <original>T</original>
    <variation>P</variation>
    <location>
        <position position="895"/>
    </location>
</feature>
<feature type="strand" evidence="4">
    <location>
        <begin position="11"/>
        <end position="18"/>
    </location>
</feature>
<feature type="helix" evidence="4">
    <location>
        <begin position="20"/>
        <end position="22"/>
    </location>
</feature>
<feature type="helix" evidence="4">
    <location>
        <begin position="29"/>
        <end position="36"/>
    </location>
</feature>
<feature type="helix" evidence="4">
    <location>
        <begin position="40"/>
        <end position="49"/>
    </location>
</feature>
<feature type="helix" evidence="4">
    <location>
        <begin position="51"/>
        <end position="61"/>
    </location>
</feature>
<feature type="helix" evidence="4">
    <location>
        <begin position="67"/>
        <end position="69"/>
    </location>
</feature>
<feature type="helix" evidence="4">
    <location>
        <begin position="70"/>
        <end position="86"/>
    </location>
</feature>
<feature type="turn" evidence="4">
    <location>
        <begin position="92"/>
        <end position="94"/>
    </location>
</feature>
<feature type="strand" evidence="4">
    <location>
        <begin position="95"/>
        <end position="102"/>
    </location>
</feature>
<feature type="strand" evidence="4">
    <location>
        <begin position="115"/>
        <end position="120"/>
    </location>
</feature>
<feature type="helix" evidence="4">
    <location>
        <begin position="122"/>
        <end position="135"/>
    </location>
</feature>
<feature type="helix" evidence="4">
    <location>
        <begin position="137"/>
        <end position="139"/>
    </location>
</feature>
<feature type="strand" evidence="4">
    <location>
        <begin position="141"/>
        <end position="144"/>
    </location>
</feature>
<feature type="strand" evidence="4">
    <location>
        <begin position="148"/>
        <end position="151"/>
    </location>
</feature>
<feature type="strand" evidence="4">
    <location>
        <begin position="154"/>
        <end position="159"/>
    </location>
</feature>
<feature type="strand" evidence="4">
    <location>
        <begin position="162"/>
        <end position="166"/>
    </location>
</feature>
<feature type="strand" evidence="4">
    <location>
        <begin position="168"/>
        <end position="172"/>
    </location>
</feature>
<feature type="helix" evidence="4">
    <location>
        <begin position="175"/>
        <end position="183"/>
    </location>
</feature>
<feature type="strand" evidence="4">
    <location>
        <begin position="185"/>
        <end position="187"/>
    </location>
</feature>
<feature type="helix" evidence="4">
    <location>
        <begin position="191"/>
        <end position="199"/>
    </location>
</feature>
<feature type="turn" evidence="4">
    <location>
        <begin position="200"/>
        <end position="202"/>
    </location>
</feature>
<feature type="helix" evidence="4">
    <location>
        <begin position="204"/>
        <end position="206"/>
    </location>
</feature>
<feature type="helix" evidence="4">
    <location>
        <begin position="207"/>
        <end position="219"/>
    </location>
</feature>
<feature type="strand" evidence="4">
    <location>
        <begin position="222"/>
        <end position="225"/>
    </location>
</feature>
<feature type="helix" evidence="4">
    <location>
        <begin position="226"/>
        <end position="228"/>
    </location>
</feature>
<feature type="turn" evidence="4">
    <location>
        <begin position="230"/>
        <end position="233"/>
    </location>
</feature>
<feature type="helix" evidence="4">
    <location>
        <begin position="237"/>
        <end position="247"/>
    </location>
</feature>
<feature type="helix" evidence="4">
    <location>
        <begin position="256"/>
        <end position="267"/>
    </location>
</feature>
<feature type="turn" evidence="4">
    <location>
        <begin position="272"/>
        <end position="274"/>
    </location>
</feature>
<feature type="helix" evidence="4">
    <location>
        <begin position="276"/>
        <end position="289"/>
    </location>
</feature>
<feature type="strand" evidence="4">
    <location>
        <begin position="296"/>
        <end position="301"/>
    </location>
</feature>
<feature type="helix" evidence="4">
    <location>
        <begin position="310"/>
        <end position="325"/>
    </location>
</feature>
<feature type="helix" evidence="4">
    <location>
        <begin position="326"/>
        <end position="329"/>
    </location>
</feature>
<feature type="helix" evidence="4">
    <location>
        <begin position="334"/>
        <end position="346"/>
    </location>
</feature>
<feature type="strand" evidence="4">
    <location>
        <begin position="348"/>
        <end position="353"/>
    </location>
</feature>
<feature type="helix" evidence="4">
    <location>
        <begin position="354"/>
        <end position="357"/>
    </location>
</feature>
<feature type="turn" evidence="4">
    <location>
        <begin position="360"/>
        <end position="362"/>
    </location>
</feature>
<feature type="strand" evidence="4">
    <location>
        <begin position="385"/>
        <end position="387"/>
    </location>
</feature>
<feature type="helix" evidence="4">
    <location>
        <begin position="389"/>
        <end position="404"/>
    </location>
</feature>
<feature type="helix" evidence="4">
    <location>
        <begin position="411"/>
        <end position="414"/>
    </location>
</feature>
<feature type="helix" evidence="4">
    <location>
        <begin position="415"/>
        <end position="420"/>
    </location>
</feature>
<feature type="strand" evidence="4">
    <location>
        <begin position="423"/>
        <end position="425"/>
    </location>
</feature>
<feature type="strand" evidence="4">
    <location>
        <begin position="432"/>
        <end position="441"/>
    </location>
</feature>
<feature type="strand" evidence="4">
    <location>
        <begin position="444"/>
        <end position="456"/>
    </location>
</feature>
<feature type="turn" evidence="4">
    <location>
        <begin position="458"/>
        <end position="465"/>
    </location>
</feature>
<feature type="helix" evidence="4">
    <location>
        <begin position="466"/>
        <end position="468"/>
    </location>
</feature>
<feature type="helix" evidence="4">
    <location>
        <begin position="470"/>
        <end position="489"/>
    </location>
</feature>
<feature type="strand" evidence="4">
    <location>
        <begin position="493"/>
        <end position="499"/>
    </location>
</feature>
<feature type="helix" evidence="4">
    <location>
        <begin position="504"/>
        <end position="508"/>
    </location>
</feature>
<feature type="strand" evidence="4">
    <location>
        <begin position="516"/>
        <end position="525"/>
    </location>
</feature>
<feature type="strand" evidence="4">
    <location>
        <begin position="527"/>
        <end position="530"/>
    </location>
</feature>
<feature type="helix" evidence="4">
    <location>
        <begin position="533"/>
        <end position="535"/>
    </location>
</feature>
<feature type="strand" evidence="4">
    <location>
        <begin position="536"/>
        <end position="540"/>
    </location>
</feature>
<feature type="strand" evidence="4">
    <location>
        <begin position="546"/>
        <end position="550"/>
    </location>
</feature>
<feature type="turn" evidence="4">
    <location>
        <begin position="551"/>
        <end position="554"/>
    </location>
</feature>
<feature type="strand" evidence="4">
    <location>
        <begin position="555"/>
        <end position="560"/>
    </location>
</feature>
<feature type="helix" evidence="4">
    <location>
        <begin position="567"/>
        <end position="569"/>
    </location>
</feature>
<feature type="helix" evidence="4">
    <location>
        <begin position="572"/>
        <end position="580"/>
    </location>
</feature>
<feature type="turn" evidence="4">
    <location>
        <begin position="584"/>
        <end position="587"/>
    </location>
</feature>
<feature type="helix" evidence="4">
    <location>
        <begin position="590"/>
        <end position="595"/>
    </location>
</feature>
<feature type="strand" evidence="4">
    <location>
        <begin position="599"/>
        <end position="601"/>
    </location>
</feature>
<feature type="strand" evidence="4">
    <location>
        <begin position="604"/>
        <end position="606"/>
    </location>
</feature>
<feature type="strand" evidence="4">
    <location>
        <begin position="609"/>
        <end position="612"/>
    </location>
</feature>
<feature type="strand" evidence="4">
    <location>
        <begin position="615"/>
        <end position="619"/>
    </location>
</feature>
<feature type="helix" evidence="4">
    <location>
        <begin position="620"/>
        <end position="622"/>
    </location>
</feature>
<feature type="helix" evidence="4">
    <location>
        <begin position="629"/>
        <end position="635"/>
    </location>
</feature>
<feature type="strand" evidence="4">
    <location>
        <begin position="640"/>
        <end position="645"/>
    </location>
</feature>
<feature type="strand" evidence="4">
    <location>
        <begin position="650"/>
        <end position="656"/>
    </location>
</feature>
<feature type="helix" evidence="4">
    <location>
        <begin position="658"/>
        <end position="674"/>
    </location>
</feature>
<feature type="strand" evidence="4">
    <location>
        <begin position="677"/>
        <end position="682"/>
    </location>
</feature>
<feature type="strand" evidence="4">
    <location>
        <begin position="687"/>
        <end position="694"/>
    </location>
</feature>
<feature type="strand" evidence="4">
    <location>
        <begin position="699"/>
        <end position="705"/>
    </location>
</feature>
<feature type="helix" evidence="4">
    <location>
        <begin position="726"/>
        <end position="729"/>
    </location>
</feature>
<feature type="strand" evidence="4">
    <location>
        <begin position="735"/>
        <end position="744"/>
    </location>
</feature>
<feature type="helix" evidence="4">
    <location>
        <begin position="746"/>
        <end position="755"/>
    </location>
</feature>
<feature type="helix" evidence="4">
    <location>
        <begin position="757"/>
        <end position="766"/>
    </location>
</feature>
<feature type="strand" evidence="4">
    <location>
        <begin position="770"/>
        <end position="776"/>
    </location>
</feature>
<feature type="strand" evidence="4">
    <location>
        <begin position="778"/>
        <end position="780"/>
    </location>
</feature>
<feature type="strand" evidence="4">
    <location>
        <begin position="782"/>
        <end position="788"/>
    </location>
</feature>
<feature type="helix" evidence="4">
    <location>
        <begin position="792"/>
        <end position="808"/>
    </location>
</feature>
<feature type="strand" evidence="4">
    <location>
        <begin position="811"/>
        <end position="817"/>
    </location>
</feature>
<feature type="turn" evidence="4">
    <location>
        <begin position="824"/>
        <end position="828"/>
    </location>
</feature>
<feature type="helix" evidence="4">
    <location>
        <begin position="830"/>
        <end position="855"/>
    </location>
</feature>
<feature type="strand" evidence="4">
    <location>
        <begin position="857"/>
        <end position="859"/>
    </location>
</feature>
<feature type="helix" evidence="4">
    <location>
        <begin position="863"/>
        <end position="878"/>
    </location>
</feature>
<feature type="turn" evidence="4">
    <location>
        <begin position="879"/>
        <end position="881"/>
    </location>
</feature>
<feature type="helix" evidence="4">
    <location>
        <begin position="883"/>
        <end position="891"/>
    </location>
</feature>
<feature type="turn" evidence="4">
    <location>
        <begin position="921"/>
        <end position="924"/>
    </location>
</feature>
<feature type="helix" evidence="4">
    <location>
        <begin position="926"/>
        <end position="944"/>
    </location>
</feature>
<feature type="helix" evidence="4">
    <location>
        <begin position="949"/>
        <end position="967"/>
    </location>
</feature>
<feature type="strand" evidence="3">
    <location>
        <begin position="973"/>
        <end position="975"/>
    </location>
</feature>
<feature type="helix" evidence="4">
    <location>
        <begin position="976"/>
        <end position="987"/>
    </location>
</feature>
<sequence length="993" mass="117502">MIKSSFKAQPFLVRNTILCPNDKRSFTEYTQVIETVSKNKVFLEQLLLANPKLYDVMQKYNAGLLKKKRVKKLFESIYKYYKRSYLRSTPFGLFSETSIGVFSKSSQYKLMGKTTKGIRLDTQWLIRLVHKMEVDFSKKLSFTRNNANYKFGDRVFQVYTINSSELEEVNIKYTNVYQIISEFCENDYQKYEDICETVTLCYGDEYRELSEQYLGSLIVNHYLISNLQKDLLSDFSWNTFLTKVEAIDEDKKYIIPLKKVQKFIQEYSEIEIGEGIEKLKEIYQEMSQILENDNYIQIDLISDSEINFDVKQKQQLEHLAEFLGNTTKSVRRTYLDDYKDKFIEKYGVDQEVQITELFDSTFGIGAPYNYNHPRNDFYESEPSTLYYSEEEREKYLSMYVEAVKNHNVINLDDLESHYQKMDLEKKSELQGLELFLNLAKEYEKDIFILGDIVGNNNLGGASGRFSALSPELTSYHRTIVDSVERENENKEITSCEIVFLPENIRHANVMHTSIMRRKVLPFFTSTSHNEVLLTNIYIGIDEKEKFYARDISTQEVLKFYITSMYNKTLFSNELRFLYEISLDDKFGNLPWELIYRDFDYIPRLVFDEIVISPAKWKIWGRDVNSKMTIRELIQSKEIPKEFYIVNGDNKVYLSQKNPLDMEILESAIKKSSKRKDFIELQEYFEDENIINKGEKGRVADVVVPFIRTRALGNEGRAFIREKRVSVERREKLPFNEWLYLKLYISINRQNEFLLSYLPDIQKIVANLGGNLFFLRYTDPKPHIRLRIKCSDLFLAYGSILEILKRSRKNRIMSTFDISIYDQEVERYGGFDTLELSEAIFCADSKIIPNLLTLIKDTNNDWKVDDVSILVNYLYLKCFFQNDNKKILNFLNLVSTKKVKENVNEKIEHYLKLLKVNNLGDQIFYDKNFKELKHAIKNLFLKMIAQDFELQKVYSIIDSIIHVHNNRLIGIERDKEKLIYYTLQRLFVSEEYMK</sequence>